<comment type="function">
    <text evidence="1">An accessory protein needed during the final step in the assembly of 30S ribosomal subunit, possibly for assembly of the head region. Essential for efficient processing of 16S rRNA. May be needed both before and after RbfA during the maturation of 16S rRNA. It has affinity for free ribosomal 30S subunits but not for 70S ribosomes.</text>
</comment>
<comment type="subunit">
    <text evidence="1">Binds ribosomal protein uS19.</text>
</comment>
<comment type="subcellular location">
    <subcellularLocation>
        <location evidence="1">Cytoplasm</location>
    </subcellularLocation>
</comment>
<comment type="domain">
    <text evidence="1">The PRC barrel domain binds ribosomal protein uS19.</text>
</comment>
<comment type="similarity">
    <text evidence="1">Belongs to the RimM family.</text>
</comment>
<sequence length="172" mass="19817">MNYFNVGKIVNTQGLQGEMRVLSVTDFAEERFKKGAELALFDEKDQFVQTVTIASHRKQKNFDIIKFKDMYHINTIEKYKGYSLKVAEEDLNDLDDGEFYYHEIIGLEVYEGDSLVGTIKEILQPGANDVWVVKRKGKRDLLLPYIPPVVLNVDIPNKRVDVEILEGLDDED</sequence>
<proteinExistence type="inferred from homology"/>
<protein>
    <recommendedName>
        <fullName evidence="1">Ribosome maturation factor RimM</fullName>
    </recommendedName>
</protein>
<dbReference type="EMBL" id="CP000921">
    <property type="protein sequence ID" value="ACO22760.1"/>
    <property type="molecule type" value="Genomic_DNA"/>
</dbReference>
<dbReference type="RefSeq" id="WP_001105899.1">
    <property type="nucleotide sequence ID" value="NC_012469.1"/>
</dbReference>
<dbReference type="SMR" id="C1CSA7"/>
<dbReference type="GeneID" id="45653851"/>
<dbReference type="KEGG" id="snt:SPT_1423"/>
<dbReference type="HOGENOM" id="CLU_077636_3_1_9"/>
<dbReference type="GO" id="GO:0005737">
    <property type="term" value="C:cytoplasm"/>
    <property type="evidence" value="ECO:0007669"/>
    <property type="project" value="UniProtKB-SubCell"/>
</dbReference>
<dbReference type="GO" id="GO:0005840">
    <property type="term" value="C:ribosome"/>
    <property type="evidence" value="ECO:0007669"/>
    <property type="project" value="InterPro"/>
</dbReference>
<dbReference type="GO" id="GO:0043022">
    <property type="term" value="F:ribosome binding"/>
    <property type="evidence" value="ECO:0007669"/>
    <property type="project" value="InterPro"/>
</dbReference>
<dbReference type="GO" id="GO:0042274">
    <property type="term" value="P:ribosomal small subunit biogenesis"/>
    <property type="evidence" value="ECO:0007669"/>
    <property type="project" value="UniProtKB-UniRule"/>
</dbReference>
<dbReference type="GO" id="GO:0006364">
    <property type="term" value="P:rRNA processing"/>
    <property type="evidence" value="ECO:0007669"/>
    <property type="project" value="UniProtKB-UniRule"/>
</dbReference>
<dbReference type="Gene3D" id="2.30.30.240">
    <property type="entry name" value="PRC-barrel domain"/>
    <property type="match status" value="1"/>
</dbReference>
<dbReference type="Gene3D" id="2.40.30.60">
    <property type="entry name" value="RimM"/>
    <property type="match status" value="1"/>
</dbReference>
<dbReference type="HAMAP" id="MF_00014">
    <property type="entry name" value="Ribosome_mat_RimM"/>
    <property type="match status" value="1"/>
</dbReference>
<dbReference type="InterPro" id="IPR027275">
    <property type="entry name" value="PRC-brl_dom"/>
</dbReference>
<dbReference type="InterPro" id="IPR011033">
    <property type="entry name" value="PRC_barrel-like_sf"/>
</dbReference>
<dbReference type="InterPro" id="IPR011961">
    <property type="entry name" value="RimM"/>
</dbReference>
<dbReference type="InterPro" id="IPR002676">
    <property type="entry name" value="RimM_N"/>
</dbReference>
<dbReference type="InterPro" id="IPR036976">
    <property type="entry name" value="RimM_N_sf"/>
</dbReference>
<dbReference type="InterPro" id="IPR009000">
    <property type="entry name" value="Transl_B-barrel_sf"/>
</dbReference>
<dbReference type="NCBIfam" id="TIGR02273">
    <property type="entry name" value="16S_RimM"/>
    <property type="match status" value="1"/>
</dbReference>
<dbReference type="PANTHER" id="PTHR33692">
    <property type="entry name" value="RIBOSOME MATURATION FACTOR RIMM"/>
    <property type="match status" value="1"/>
</dbReference>
<dbReference type="PANTHER" id="PTHR33692:SF1">
    <property type="entry name" value="RIBOSOME MATURATION FACTOR RIMM"/>
    <property type="match status" value="1"/>
</dbReference>
<dbReference type="Pfam" id="PF05239">
    <property type="entry name" value="PRC"/>
    <property type="match status" value="1"/>
</dbReference>
<dbReference type="Pfam" id="PF01782">
    <property type="entry name" value="RimM"/>
    <property type="match status" value="1"/>
</dbReference>
<dbReference type="SUPFAM" id="SSF50346">
    <property type="entry name" value="PRC-barrel domain"/>
    <property type="match status" value="1"/>
</dbReference>
<dbReference type="SUPFAM" id="SSF50447">
    <property type="entry name" value="Translation proteins"/>
    <property type="match status" value="1"/>
</dbReference>
<reference key="1">
    <citation type="journal article" date="2010" name="Genome Biol.">
        <title>Structure and dynamics of the pan-genome of Streptococcus pneumoniae and closely related species.</title>
        <authorList>
            <person name="Donati C."/>
            <person name="Hiller N.L."/>
            <person name="Tettelin H."/>
            <person name="Muzzi A."/>
            <person name="Croucher N.J."/>
            <person name="Angiuoli S.V."/>
            <person name="Oggioni M."/>
            <person name="Dunning Hotopp J.C."/>
            <person name="Hu F.Z."/>
            <person name="Riley D.R."/>
            <person name="Covacci A."/>
            <person name="Mitchell T.J."/>
            <person name="Bentley S.D."/>
            <person name="Kilian M."/>
            <person name="Ehrlich G.D."/>
            <person name="Rappuoli R."/>
            <person name="Moxon E.R."/>
            <person name="Masignani V."/>
        </authorList>
    </citation>
    <scope>NUCLEOTIDE SEQUENCE [LARGE SCALE GENOMIC DNA]</scope>
    <source>
        <strain>Taiwan19F-14</strain>
    </source>
</reference>
<accession>C1CSA7</accession>
<feature type="chain" id="PRO_1000116586" description="Ribosome maturation factor RimM">
    <location>
        <begin position="1"/>
        <end position="172"/>
    </location>
</feature>
<feature type="domain" description="PRC barrel" evidence="1">
    <location>
        <begin position="95"/>
        <end position="168"/>
    </location>
</feature>
<keyword id="KW-0143">Chaperone</keyword>
<keyword id="KW-0963">Cytoplasm</keyword>
<keyword id="KW-0690">Ribosome biogenesis</keyword>
<keyword id="KW-0698">rRNA processing</keyword>
<organism>
    <name type="scientific">Streptococcus pneumoniae (strain Taiwan19F-14)</name>
    <dbReference type="NCBI Taxonomy" id="487213"/>
    <lineage>
        <taxon>Bacteria</taxon>
        <taxon>Bacillati</taxon>
        <taxon>Bacillota</taxon>
        <taxon>Bacilli</taxon>
        <taxon>Lactobacillales</taxon>
        <taxon>Streptococcaceae</taxon>
        <taxon>Streptococcus</taxon>
    </lineage>
</organism>
<name>RIMM_STRZT</name>
<evidence type="ECO:0000255" key="1">
    <source>
        <dbReference type="HAMAP-Rule" id="MF_00014"/>
    </source>
</evidence>
<gene>
    <name evidence="1" type="primary">rimM</name>
    <name type="ordered locus">SPT_1423</name>
</gene>